<protein>
    <recommendedName>
        <fullName>Glyceraldehyde-3-phosphate dehydrogenase</fullName>
        <shortName>GAPDH</shortName>
        <ecNumber evidence="1">1.2.1.12</ecNumber>
    </recommendedName>
    <alternativeName>
        <fullName evidence="5">Peptidyl-cysteine S-nitrosylase GAPDH</fullName>
        <ecNumber evidence="2">2.6.99.-</ecNumber>
    </alternativeName>
</protein>
<dbReference type="EC" id="1.2.1.12" evidence="1"/>
<dbReference type="EC" id="2.6.99.-" evidence="2"/>
<dbReference type="EMBL" id="AF027130">
    <property type="protein sequence ID" value="AAB82747.1"/>
    <property type="molecule type" value="mRNA"/>
</dbReference>
<dbReference type="RefSeq" id="NP_001117718.1">
    <property type="nucleotide sequence ID" value="NM_001124246.1"/>
</dbReference>
<dbReference type="SMR" id="O42259"/>
<dbReference type="GeneID" id="100135863"/>
<dbReference type="KEGG" id="omy:100135863"/>
<dbReference type="OrthoDB" id="1152826at2759"/>
<dbReference type="SABIO-RK" id="O42259"/>
<dbReference type="UniPathway" id="UPA00109">
    <property type="reaction ID" value="UER00184"/>
</dbReference>
<dbReference type="Proteomes" id="UP000694395">
    <property type="component" value="Unplaced"/>
</dbReference>
<dbReference type="GO" id="GO:0005737">
    <property type="term" value="C:cytoplasm"/>
    <property type="evidence" value="ECO:0000250"/>
    <property type="project" value="UniProtKB"/>
</dbReference>
<dbReference type="GO" id="GO:0005829">
    <property type="term" value="C:cytosol"/>
    <property type="evidence" value="ECO:0000250"/>
    <property type="project" value="UniProtKB"/>
</dbReference>
<dbReference type="GO" id="GO:0015630">
    <property type="term" value="C:microtubule cytoskeleton"/>
    <property type="evidence" value="ECO:0000250"/>
    <property type="project" value="UniProtKB"/>
</dbReference>
<dbReference type="GO" id="GO:0005634">
    <property type="term" value="C:nucleus"/>
    <property type="evidence" value="ECO:0000250"/>
    <property type="project" value="UniProtKB"/>
</dbReference>
<dbReference type="GO" id="GO:0004365">
    <property type="term" value="F:glyceraldehyde-3-phosphate dehydrogenase (NAD+) (phosphorylating) activity"/>
    <property type="evidence" value="ECO:0000250"/>
    <property type="project" value="UniProtKB"/>
</dbReference>
<dbReference type="GO" id="GO:0008017">
    <property type="term" value="F:microtubule binding"/>
    <property type="evidence" value="ECO:0000250"/>
    <property type="project" value="UniProtKB"/>
</dbReference>
<dbReference type="GO" id="GO:0051287">
    <property type="term" value="F:NAD binding"/>
    <property type="evidence" value="ECO:0007669"/>
    <property type="project" value="InterPro"/>
</dbReference>
<dbReference type="GO" id="GO:0050661">
    <property type="term" value="F:NADP binding"/>
    <property type="evidence" value="ECO:0007669"/>
    <property type="project" value="InterPro"/>
</dbReference>
<dbReference type="GO" id="GO:0035605">
    <property type="term" value="F:peptidyl-cysteine S-nitrosylase activity"/>
    <property type="evidence" value="ECO:0000250"/>
    <property type="project" value="UniProtKB"/>
</dbReference>
<dbReference type="GO" id="GO:0006006">
    <property type="term" value="P:glucose metabolic process"/>
    <property type="evidence" value="ECO:0007669"/>
    <property type="project" value="InterPro"/>
</dbReference>
<dbReference type="GO" id="GO:0006096">
    <property type="term" value="P:glycolytic process"/>
    <property type="evidence" value="ECO:0007669"/>
    <property type="project" value="UniProtKB-UniPathway"/>
</dbReference>
<dbReference type="GO" id="GO:0000226">
    <property type="term" value="P:microtubule cytoskeleton organization"/>
    <property type="evidence" value="ECO:0000250"/>
    <property type="project" value="UniProtKB"/>
</dbReference>
<dbReference type="GO" id="GO:0051402">
    <property type="term" value="P:neuron apoptotic process"/>
    <property type="evidence" value="ECO:0000250"/>
    <property type="project" value="UniProtKB"/>
</dbReference>
<dbReference type="GO" id="GO:0035606">
    <property type="term" value="P:peptidyl-cysteine S-trans-nitrosylation"/>
    <property type="evidence" value="ECO:0000250"/>
    <property type="project" value="UniProtKB"/>
</dbReference>
<dbReference type="GO" id="GO:0043123">
    <property type="term" value="P:positive regulation of canonical NF-kappaB signal transduction"/>
    <property type="evidence" value="ECO:0000250"/>
    <property type="project" value="UniProtKB"/>
</dbReference>
<dbReference type="GO" id="GO:0032481">
    <property type="term" value="P:positive regulation of type I interferon production"/>
    <property type="evidence" value="ECO:0000250"/>
    <property type="project" value="UniProtKB"/>
</dbReference>
<dbReference type="GO" id="GO:0050821">
    <property type="term" value="P:protein stabilization"/>
    <property type="evidence" value="ECO:0000250"/>
    <property type="project" value="UniProtKB"/>
</dbReference>
<dbReference type="CDD" id="cd18126">
    <property type="entry name" value="GAPDH_I_C"/>
    <property type="match status" value="1"/>
</dbReference>
<dbReference type="CDD" id="cd05214">
    <property type="entry name" value="GAPDH_I_N"/>
    <property type="match status" value="1"/>
</dbReference>
<dbReference type="FunFam" id="3.30.360.10:FF:000001">
    <property type="entry name" value="Glyceraldehyde-3-phosphate dehydrogenase"/>
    <property type="match status" value="1"/>
</dbReference>
<dbReference type="FunFam" id="3.40.50.720:FF:000020">
    <property type="entry name" value="Glyceraldehyde-3-phosphate dehydrogenase"/>
    <property type="match status" value="1"/>
</dbReference>
<dbReference type="Gene3D" id="3.30.360.10">
    <property type="entry name" value="Dihydrodipicolinate Reductase, domain 2"/>
    <property type="match status" value="1"/>
</dbReference>
<dbReference type="Gene3D" id="3.40.50.720">
    <property type="entry name" value="NAD(P)-binding Rossmann-like Domain"/>
    <property type="match status" value="1"/>
</dbReference>
<dbReference type="InterPro" id="IPR020831">
    <property type="entry name" value="GlycerAld/Erythrose_P_DH"/>
</dbReference>
<dbReference type="InterPro" id="IPR020830">
    <property type="entry name" value="GlycerAld_3-P_DH_AS"/>
</dbReference>
<dbReference type="InterPro" id="IPR020829">
    <property type="entry name" value="GlycerAld_3-P_DH_cat"/>
</dbReference>
<dbReference type="InterPro" id="IPR020828">
    <property type="entry name" value="GlycerAld_3-P_DH_NAD(P)-bd"/>
</dbReference>
<dbReference type="InterPro" id="IPR006424">
    <property type="entry name" value="Glyceraldehyde-3-P_DH_1"/>
</dbReference>
<dbReference type="InterPro" id="IPR036291">
    <property type="entry name" value="NAD(P)-bd_dom_sf"/>
</dbReference>
<dbReference type="NCBIfam" id="TIGR01534">
    <property type="entry name" value="GAPDH-I"/>
    <property type="match status" value="1"/>
</dbReference>
<dbReference type="PANTHER" id="PTHR10836">
    <property type="entry name" value="GLYCERALDEHYDE 3-PHOSPHATE DEHYDROGENASE"/>
    <property type="match status" value="1"/>
</dbReference>
<dbReference type="PANTHER" id="PTHR10836:SF79">
    <property type="entry name" value="GLYCERALDEHYDE-3-PHOSPHATE DEHYDROGENASE, TESTIS-SPECIFIC"/>
    <property type="match status" value="1"/>
</dbReference>
<dbReference type="Pfam" id="PF02800">
    <property type="entry name" value="Gp_dh_C"/>
    <property type="match status" value="1"/>
</dbReference>
<dbReference type="Pfam" id="PF00044">
    <property type="entry name" value="Gp_dh_N"/>
    <property type="match status" value="1"/>
</dbReference>
<dbReference type="PIRSF" id="PIRSF000149">
    <property type="entry name" value="GAP_DH"/>
    <property type="match status" value="1"/>
</dbReference>
<dbReference type="PRINTS" id="PR00078">
    <property type="entry name" value="G3PDHDRGNASE"/>
</dbReference>
<dbReference type="SMART" id="SM00846">
    <property type="entry name" value="Gp_dh_N"/>
    <property type="match status" value="1"/>
</dbReference>
<dbReference type="SUPFAM" id="SSF55347">
    <property type="entry name" value="Glyceraldehyde-3-phosphate dehydrogenase-like, C-terminal domain"/>
    <property type="match status" value="1"/>
</dbReference>
<dbReference type="SUPFAM" id="SSF51735">
    <property type="entry name" value="NAD(P)-binding Rossmann-fold domains"/>
    <property type="match status" value="1"/>
</dbReference>
<dbReference type="PROSITE" id="PS00071">
    <property type="entry name" value="GAPDH"/>
    <property type="match status" value="1"/>
</dbReference>
<evidence type="ECO:0000250" key="1">
    <source>
        <dbReference type="UniProtKB" id="P04406"/>
    </source>
</evidence>
<evidence type="ECO:0000250" key="2">
    <source>
        <dbReference type="UniProtKB" id="P04797"/>
    </source>
</evidence>
<evidence type="ECO:0000250" key="3">
    <source>
        <dbReference type="UniProtKB" id="P22513"/>
    </source>
</evidence>
<evidence type="ECO:0000255" key="4">
    <source>
        <dbReference type="PROSITE-ProRule" id="PRU10009"/>
    </source>
</evidence>
<evidence type="ECO:0000305" key="5"/>
<keyword id="KW-0053">Apoptosis</keyword>
<keyword id="KW-0963">Cytoplasm</keyword>
<keyword id="KW-0206">Cytoskeleton</keyword>
<keyword id="KW-0324">Glycolysis</keyword>
<keyword id="KW-0520">NAD</keyword>
<keyword id="KW-0539">Nucleus</keyword>
<keyword id="KW-0560">Oxidoreductase</keyword>
<keyword id="KW-0702">S-nitrosylation</keyword>
<keyword id="KW-0808">Transferase</keyword>
<feature type="chain" id="PRO_0000145500" description="Glyceraldehyde-3-phosphate dehydrogenase">
    <location>
        <begin position="1"/>
        <end position="335"/>
    </location>
</feature>
<feature type="active site" description="Nucleophile" evidence="4">
    <location>
        <position position="152"/>
    </location>
</feature>
<feature type="binding site" evidence="1">
    <location>
        <begin position="13"/>
        <end position="14"/>
    </location>
    <ligand>
        <name>NAD(+)</name>
        <dbReference type="ChEBI" id="CHEBI:57540"/>
    </ligand>
</feature>
<feature type="binding site" evidence="1">
    <location>
        <position position="34"/>
    </location>
    <ligand>
        <name>NAD(+)</name>
        <dbReference type="ChEBI" id="CHEBI:57540"/>
    </ligand>
</feature>
<feature type="binding site" evidence="1">
    <location>
        <position position="79"/>
    </location>
    <ligand>
        <name>NAD(+)</name>
        <dbReference type="ChEBI" id="CHEBI:57540"/>
    </ligand>
</feature>
<feature type="binding site" evidence="1">
    <location>
        <position position="121"/>
    </location>
    <ligand>
        <name>NAD(+)</name>
        <dbReference type="ChEBI" id="CHEBI:57540"/>
    </ligand>
</feature>
<feature type="binding site" evidence="3">
    <location>
        <begin position="151"/>
        <end position="153"/>
    </location>
    <ligand>
        <name>D-glyceraldehyde 3-phosphate</name>
        <dbReference type="ChEBI" id="CHEBI:59776"/>
    </ligand>
</feature>
<feature type="binding site" evidence="3">
    <location>
        <position position="182"/>
    </location>
    <ligand>
        <name>D-glyceraldehyde 3-phosphate</name>
        <dbReference type="ChEBI" id="CHEBI:59776"/>
    </ligand>
</feature>
<feature type="binding site" evidence="3">
    <location>
        <begin position="211"/>
        <end position="212"/>
    </location>
    <ligand>
        <name>D-glyceraldehyde 3-phosphate</name>
        <dbReference type="ChEBI" id="CHEBI:59776"/>
    </ligand>
</feature>
<feature type="binding site" evidence="3">
    <location>
        <position position="234"/>
    </location>
    <ligand>
        <name>D-glyceraldehyde 3-phosphate</name>
        <dbReference type="ChEBI" id="CHEBI:59776"/>
    </ligand>
</feature>
<feature type="binding site" evidence="1">
    <location>
        <position position="316"/>
    </location>
    <ligand>
        <name>NAD(+)</name>
        <dbReference type="ChEBI" id="CHEBI:57540"/>
    </ligand>
</feature>
<feature type="site" description="Activates thiol group during catalysis" evidence="1">
    <location>
        <position position="179"/>
    </location>
</feature>
<feature type="modified residue" description="S-nitrosocysteine" evidence="2">
    <location>
        <position position="152"/>
    </location>
</feature>
<gene>
    <name type="primary">gapdh</name>
    <name type="synonym">gapd</name>
</gene>
<comment type="function">
    <text evidence="1 2">Has both glyceraldehyde-3-phosphate dehydrogenase and nitrosylase activities, thereby playing a role in glycolysis and nuclear functions, respectively. Glyceraldehyde-3-phosphate dehydrogenase is a key enzyme in glycolysis that catalyzes the first step of the pathway by converting D-glyceraldehyde 3-phosphate (G3P) into 3-phospho-D-glyceroyl phosphate (By similarity). Participates in nuclear events including transcription, RNA transport, DNA replication and apoptosis. Nuclear functions are probably due to the nitrosylase activity that mediates cysteine S-nitrosylation of nuclear target proteins such as SIRT1, HDAC2 and PRKDC (By similarity).</text>
</comment>
<comment type="catalytic activity">
    <reaction evidence="1 4">
        <text>D-glyceraldehyde 3-phosphate + phosphate + NAD(+) = (2R)-3-phospho-glyceroyl phosphate + NADH + H(+)</text>
        <dbReference type="Rhea" id="RHEA:10300"/>
        <dbReference type="ChEBI" id="CHEBI:15378"/>
        <dbReference type="ChEBI" id="CHEBI:43474"/>
        <dbReference type="ChEBI" id="CHEBI:57540"/>
        <dbReference type="ChEBI" id="CHEBI:57604"/>
        <dbReference type="ChEBI" id="CHEBI:57945"/>
        <dbReference type="ChEBI" id="CHEBI:59776"/>
        <dbReference type="EC" id="1.2.1.12"/>
    </reaction>
</comment>
<comment type="catalytic activity">
    <reaction evidence="2">
        <text>S-nitroso-L-cysteinyl-[GAPDH] + L-cysteinyl-[protein] = L-cysteinyl-[GAPDH] + S-nitroso-L-cysteinyl-[protein]</text>
        <dbReference type="Rhea" id="RHEA:66684"/>
        <dbReference type="Rhea" id="RHEA-COMP:10131"/>
        <dbReference type="Rhea" id="RHEA-COMP:17089"/>
        <dbReference type="Rhea" id="RHEA-COMP:17090"/>
        <dbReference type="Rhea" id="RHEA-COMP:17091"/>
        <dbReference type="ChEBI" id="CHEBI:29950"/>
        <dbReference type="ChEBI" id="CHEBI:149494"/>
    </reaction>
    <physiologicalReaction direction="left-to-right" evidence="2">
        <dbReference type="Rhea" id="RHEA:66685"/>
    </physiologicalReaction>
</comment>
<comment type="pathway">
    <text>Carbohydrate degradation; glycolysis; pyruvate from D-glyceraldehyde 3-phosphate: step 1/5.</text>
</comment>
<comment type="subunit">
    <text evidence="1">Homotetramer.</text>
</comment>
<comment type="subcellular location">
    <subcellularLocation>
        <location evidence="2">Cytoplasm</location>
        <location evidence="2">Cytosol</location>
    </subcellularLocation>
    <subcellularLocation>
        <location evidence="2">Cytoplasm</location>
        <location evidence="2">Cytoskeleton</location>
    </subcellularLocation>
    <subcellularLocation>
        <location evidence="2">Nucleus</location>
    </subcellularLocation>
</comment>
<comment type="PTM">
    <text evidence="2">S-nitrosylation of Cys-152 leads to translocation to the nucleus.</text>
</comment>
<comment type="similarity">
    <text evidence="5">Belongs to the glyceraldehyde-3-phosphate dehydrogenase family.</text>
</comment>
<sequence>MSDLCVGINGFGRIGRLVLRACLQKGIKVVAINDPFIDLQYMVYMFKYDSTHGRYKGEVSMEDGKLIVDDHSISVFQCMKPHEIPWGKAGADYVVESTGVFLSIDKASSHIQGGAKRVVVSAPSPDAPMFVMGVNEDKFDPSSMTIVSNASCTTNCLAPLAKVIHDNFGIEEALMTTVHAYTATQKTVDGPSAKAWRDGRGAHQNIIPASTGAAKAVGKVIPELNGKLTGMAFRVPVADVSVVELTCRLSRPGSYAEIKGAVKKAAEGPMKGYVGYTEYSVVSSDFIGDTHSSMFDAGAGISFNDNFVKLISWYDNEFGYSHRVADLLLYMHFKE</sequence>
<reference key="1">
    <citation type="submission" date="1997-09" db="EMBL/GenBank/DDBJ databases">
        <authorList>
            <person name="Abnet C.C."/>
            <person name="Peterson R.E."/>
        </authorList>
    </citation>
    <scope>NUCLEOTIDE SEQUENCE [MRNA]</scope>
    <source>
        <tissue>Gonad</tissue>
    </source>
</reference>
<name>G3P_ONCMY</name>
<proteinExistence type="evidence at transcript level"/>
<accession>O42259</accession>
<organism>
    <name type="scientific">Oncorhynchus mykiss</name>
    <name type="common">Rainbow trout</name>
    <name type="synonym">Salmo gairdneri</name>
    <dbReference type="NCBI Taxonomy" id="8022"/>
    <lineage>
        <taxon>Eukaryota</taxon>
        <taxon>Metazoa</taxon>
        <taxon>Chordata</taxon>
        <taxon>Craniata</taxon>
        <taxon>Vertebrata</taxon>
        <taxon>Euteleostomi</taxon>
        <taxon>Actinopterygii</taxon>
        <taxon>Neopterygii</taxon>
        <taxon>Teleostei</taxon>
        <taxon>Protacanthopterygii</taxon>
        <taxon>Salmoniformes</taxon>
        <taxon>Salmonidae</taxon>
        <taxon>Salmoninae</taxon>
        <taxon>Oncorhynchus</taxon>
    </lineage>
</organism>